<protein>
    <recommendedName>
        <fullName evidence="4">opdI</fullName>
    </recommendedName>
    <alternativeName>
        <fullName evidence="4">Oxopyrrolidines biosynthesis cluster protein I</fullName>
    </alternativeName>
</protein>
<keyword id="KW-0472">Membrane</keyword>
<keyword id="KW-1185">Reference proteome</keyword>
<keyword id="KW-0812">Transmembrane</keyword>
<keyword id="KW-1133">Transmembrane helix</keyword>
<name>OPDI_PENO1</name>
<dbReference type="EMBL" id="KB644408">
    <property type="protein sequence ID" value="EPS26296.1"/>
    <property type="molecule type" value="Genomic_DNA"/>
</dbReference>
<dbReference type="HOGENOM" id="CLU_2292624_0_0_1"/>
<dbReference type="OrthoDB" id="4468080at2759"/>
<dbReference type="PhylomeDB" id="S7ZC62"/>
<dbReference type="Proteomes" id="UP000019376">
    <property type="component" value="Unassembled WGS sequence"/>
</dbReference>
<dbReference type="GO" id="GO:0016020">
    <property type="term" value="C:membrane"/>
    <property type="evidence" value="ECO:0007669"/>
    <property type="project" value="UniProtKB-SubCell"/>
</dbReference>
<evidence type="ECO:0000255" key="1"/>
<evidence type="ECO:0000256" key="2">
    <source>
        <dbReference type="SAM" id="MobiDB-lite"/>
    </source>
</evidence>
<evidence type="ECO:0000269" key="3">
    <source>
    </source>
</evidence>
<evidence type="ECO:0000303" key="4">
    <source>
    </source>
</evidence>
<comment type="function">
    <text evidence="3">Part of the gene cluster that mediates the biosynthesis of oxopyrrolidines, polyketide-amino acid hybrid compounds with feature structures of tetramic acid (PubMed:36005526). Does not seem to play a role in oxopyrrolidines A and B biosynthesis (PubMed:36005526).</text>
</comment>
<comment type="subcellular location">
    <subcellularLocation>
        <location evidence="1">Membrane</location>
        <topology evidence="1">Single-pass membrane protein</topology>
    </subcellularLocation>
</comment>
<comment type="disruption phenotype">
    <text evidence="3">Does not affect the production of oxopyrrolidines A and B.</text>
</comment>
<feature type="chain" id="PRO_0000457057" description="opdI">
    <location>
        <begin position="1"/>
        <end position="101"/>
    </location>
</feature>
<feature type="transmembrane region" description="Helical" evidence="1">
    <location>
        <begin position="30"/>
        <end position="49"/>
    </location>
</feature>
<feature type="region of interest" description="Disordered" evidence="2">
    <location>
        <begin position="56"/>
        <end position="101"/>
    </location>
</feature>
<feature type="compositionally biased region" description="Polar residues" evidence="2">
    <location>
        <begin position="66"/>
        <end position="81"/>
    </location>
</feature>
<feature type="compositionally biased region" description="Polar residues" evidence="2">
    <location>
        <begin position="91"/>
        <end position="101"/>
    </location>
</feature>
<proteinExistence type="inferred from homology"/>
<gene>
    <name evidence="4" type="primary">opdI</name>
    <name type="ORF">PDE_01232</name>
</gene>
<reference key="1">
    <citation type="journal article" date="2013" name="PLoS ONE">
        <title>Genomic and secretomic analyses reveal unique features of the lignocellulolytic enzyme system of Penicillium decumbens.</title>
        <authorList>
            <person name="Liu G."/>
            <person name="Zhang L."/>
            <person name="Wei X."/>
            <person name="Zou G."/>
            <person name="Qin Y."/>
            <person name="Ma L."/>
            <person name="Li J."/>
            <person name="Zheng H."/>
            <person name="Wang S."/>
            <person name="Wang C."/>
            <person name="Xun L."/>
            <person name="Zhao G.-P."/>
            <person name="Zhou Z."/>
            <person name="Qu Y."/>
        </authorList>
    </citation>
    <scope>NUCLEOTIDE SEQUENCE [LARGE SCALE GENOMIC DNA]</scope>
    <source>
        <strain>114-2 / CGMCC 5302</strain>
    </source>
</reference>
<reference key="2">
    <citation type="journal article" date="2022" name="Mar. Drugs">
        <title>Identification of PKS-NRPS Hybrid Metabolites in Marine-Derived Penicillium oxalicum.</title>
        <authorList>
            <person name="Li H."/>
            <person name="Zhang W."/>
            <person name="Zhang X."/>
            <person name="Tang S."/>
            <person name="Men P."/>
            <person name="Xiong M."/>
            <person name="Li Z."/>
            <person name="Zhang Y."/>
            <person name="Huang X."/>
            <person name="Lu X."/>
        </authorList>
    </citation>
    <scope>FUNCTION</scope>
    <scope>DISRUPTION PHENOTYPE</scope>
</reference>
<accession>S7ZC62</accession>
<organism>
    <name type="scientific">Penicillium oxalicum (strain 114-2 / CGMCC 5302)</name>
    <name type="common">Penicillium decumbens</name>
    <dbReference type="NCBI Taxonomy" id="933388"/>
    <lineage>
        <taxon>Eukaryota</taxon>
        <taxon>Fungi</taxon>
        <taxon>Dikarya</taxon>
        <taxon>Ascomycota</taxon>
        <taxon>Pezizomycotina</taxon>
        <taxon>Eurotiomycetes</taxon>
        <taxon>Eurotiomycetidae</taxon>
        <taxon>Eurotiales</taxon>
        <taxon>Aspergillaceae</taxon>
        <taxon>Penicillium</taxon>
    </lineage>
</organism>
<sequence>MRGYRSSQRTFFRGFDPRHAYRFRGDGRHGGMGGALKIVFLGMMTYFIAKKAFRSSQHPPTDFNAPVQSVPQRAQRPSDTRLQGPVLLASNHPSGDSASPE</sequence>